<organism>
    <name type="scientific">Citrobacter koseri (strain ATCC BAA-895 / CDC 4225-83 / SGSC4696)</name>
    <dbReference type="NCBI Taxonomy" id="290338"/>
    <lineage>
        <taxon>Bacteria</taxon>
        <taxon>Pseudomonadati</taxon>
        <taxon>Pseudomonadota</taxon>
        <taxon>Gammaproteobacteria</taxon>
        <taxon>Enterobacterales</taxon>
        <taxon>Enterobacteriaceae</taxon>
        <taxon>Citrobacter</taxon>
    </lineage>
</organism>
<feature type="chain" id="PRO_1000017365" description="Enterobactin exporter EntS">
    <location>
        <begin position="1"/>
        <end position="416"/>
    </location>
</feature>
<feature type="topological domain" description="Cytoplasmic" evidence="1">
    <location>
        <begin position="1"/>
        <end position="21"/>
    </location>
</feature>
<feature type="transmembrane region" description="Helical" evidence="1">
    <location>
        <begin position="22"/>
        <end position="42"/>
    </location>
</feature>
<feature type="topological domain" description="Periplasmic" evidence="1">
    <location>
        <begin position="43"/>
        <end position="55"/>
    </location>
</feature>
<feature type="transmembrane region" description="Helical" evidence="1">
    <location>
        <begin position="56"/>
        <end position="76"/>
    </location>
</feature>
<feature type="topological domain" description="Cytoplasmic" evidence="1">
    <location>
        <begin position="77"/>
        <end position="83"/>
    </location>
</feature>
<feature type="transmembrane region" description="Helical" evidence="1">
    <location>
        <begin position="84"/>
        <end position="104"/>
    </location>
</feature>
<feature type="topological domain" description="Periplasmic" evidence="1">
    <location>
        <begin position="105"/>
        <end position="109"/>
    </location>
</feature>
<feature type="transmembrane region" description="Helical" evidence="1">
    <location>
        <begin position="110"/>
        <end position="130"/>
    </location>
</feature>
<feature type="topological domain" description="Cytoplasmic" evidence="1">
    <location>
        <begin position="131"/>
        <end position="156"/>
    </location>
</feature>
<feature type="transmembrane region" description="Helical" evidence="1">
    <location>
        <begin position="157"/>
        <end position="177"/>
    </location>
</feature>
<feature type="topological domain" description="Periplasmic" evidence="1">
    <location>
        <position position="178"/>
    </location>
</feature>
<feature type="transmembrane region" description="Helical" evidence="1">
    <location>
        <begin position="179"/>
        <end position="199"/>
    </location>
</feature>
<feature type="topological domain" description="Cytoplasmic" evidence="1">
    <location>
        <begin position="200"/>
        <end position="218"/>
    </location>
</feature>
<feature type="transmembrane region" description="Helical" evidence="1">
    <location>
        <begin position="219"/>
        <end position="239"/>
    </location>
</feature>
<feature type="topological domain" description="Periplasmic" evidence="1">
    <location>
        <begin position="240"/>
        <end position="256"/>
    </location>
</feature>
<feature type="transmembrane region" description="Helical" evidence="1">
    <location>
        <begin position="257"/>
        <end position="277"/>
    </location>
</feature>
<feature type="topological domain" description="Cytoplasmic" evidence="1">
    <location>
        <begin position="278"/>
        <end position="287"/>
    </location>
</feature>
<feature type="transmembrane region" description="Helical" evidence="1">
    <location>
        <begin position="288"/>
        <end position="307"/>
    </location>
</feature>
<feature type="topological domain" description="Periplasmic" evidence="1">
    <location>
        <begin position="308"/>
        <end position="313"/>
    </location>
</feature>
<feature type="transmembrane region" description="Helical" evidence="1">
    <location>
        <begin position="314"/>
        <end position="336"/>
    </location>
</feature>
<feature type="topological domain" description="Cytoplasmic" evidence="1">
    <location>
        <begin position="337"/>
        <end position="356"/>
    </location>
</feature>
<feature type="transmembrane region" description="Helical" evidence="1">
    <location>
        <begin position="357"/>
        <end position="377"/>
    </location>
</feature>
<feature type="topological domain" description="Periplasmic" evidence="1">
    <location>
        <position position="378"/>
    </location>
</feature>
<feature type="transmembrane region" description="Helical" evidence="1">
    <location>
        <begin position="379"/>
        <end position="399"/>
    </location>
</feature>
<feature type="topological domain" description="Cytoplasmic" evidence="1">
    <location>
        <begin position="400"/>
        <end position="416"/>
    </location>
</feature>
<gene>
    <name evidence="1" type="primary">entS</name>
    <name type="ordered locus">CKO_02570</name>
</gene>
<accession>A8AJL6</accession>
<proteinExistence type="inferred from homology"/>
<dbReference type="EMBL" id="CP000822">
    <property type="protein sequence ID" value="ABV13679.1"/>
    <property type="molecule type" value="Genomic_DNA"/>
</dbReference>
<dbReference type="RefSeq" id="WP_012133398.1">
    <property type="nucleotide sequence ID" value="NC_009792.1"/>
</dbReference>
<dbReference type="SMR" id="A8AJL6"/>
<dbReference type="STRING" id="290338.CKO_02570"/>
<dbReference type="GeneID" id="45136441"/>
<dbReference type="KEGG" id="cko:CKO_02570"/>
<dbReference type="HOGENOM" id="CLU_034180_11_0_6"/>
<dbReference type="OrthoDB" id="7283966at2"/>
<dbReference type="Proteomes" id="UP000008148">
    <property type="component" value="Chromosome"/>
</dbReference>
<dbReference type="GO" id="GO:0005886">
    <property type="term" value="C:plasma membrane"/>
    <property type="evidence" value="ECO:0007669"/>
    <property type="project" value="UniProtKB-SubCell"/>
</dbReference>
<dbReference type="GO" id="GO:0042931">
    <property type="term" value="F:enterobactin transmembrane transporter activity"/>
    <property type="evidence" value="ECO:0007669"/>
    <property type="project" value="InterPro"/>
</dbReference>
<dbReference type="CDD" id="cd06173">
    <property type="entry name" value="MFS_MefA_like"/>
    <property type="match status" value="1"/>
</dbReference>
<dbReference type="FunFam" id="1.20.1250.20:FF:000056">
    <property type="entry name" value="Enterobactin exporter EntS"/>
    <property type="match status" value="1"/>
</dbReference>
<dbReference type="Gene3D" id="1.20.1250.20">
    <property type="entry name" value="MFS general substrate transporter like domains"/>
    <property type="match status" value="1"/>
</dbReference>
<dbReference type="HAMAP" id="MF_01436">
    <property type="entry name" value="MFS_EntS"/>
    <property type="match status" value="1"/>
</dbReference>
<dbReference type="InterPro" id="IPR023722">
    <property type="entry name" value="Enterobactin_exp_EntS"/>
</dbReference>
<dbReference type="InterPro" id="IPR020846">
    <property type="entry name" value="MFS_dom"/>
</dbReference>
<dbReference type="InterPro" id="IPR036259">
    <property type="entry name" value="MFS_trans_sf"/>
</dbReference>
<dbReference type="InterPro" id="IPR010290">
    <property type="entry name" value="TM_effector"/>
</dbReference>
<dbReference type="NCBIfam" id="NF007792">
    <property type="entry name" value="PRK10489.1"/>
    <property type="match status" value="1"/>
</dbReference>
<dbReference type="PANTHER" id="PTHR23513:SF9">
    <property type="entry name" value="ENTEROBACTIN EXPORTER ENTS"/>
    <property type="match status" value="1"/>
</dbReference>
<dbReference type="PANTHER" id="PTHR23513">
    <property type="entry name" value="INTEGRAL MEMBRANE EFFLUX PROTEIN-RELATED"/>
    <property type="match status" value="1"/>
</dbReference>
<dbReference type="Pfam" id="PF05977">
    <property type="entry name" value="MFS_3"/>
    <property type="match status" value="1"/>
</dbReference>
<dbReference type="SUPFAM" id="SSF103473">
    <property type="entry name" value="MFS general substrate transporter"/>
    <property type="match status" value="1"/>
</dbReference>
<dbReference type="PROSITE" id="PS50850">
    <property type="entry name" value="MFS"/>
    <property type="match status" value="1"/>
</dbReference>
<evidence type="ECO:0000255" key="1">
    <source>
        <dbReference type="HAMAP-Rule" id="MF_01436"/>
    </source>
</evidence>
<reference key="1">
    <citation type="submission" date="2007-08" db="EMBL/GenBank/DDBJ databases">
        <authorList>
            <consortium name="The Citrobacter koseri Genome Sequencing Project"/>
            <person name="McClelland M."/>
            <person name="Sanderson E.K."/>
            <person name="Porwollik S."/>
            <person name="Spieth J."/>
            <person name="Clifton W.S."/>
            <person name="Latreille P."/>
            <person name="Courtney L."/>
            <person name="Wang C."/>
            <person name="Pepin K."/>
            <person name="Bhonagiri V."/>
            <person name="Nash W."/>
            <person name="Johnson M."/>
            <person name="Thiruvilangam P."/>
            <person name="Wilson R."/>
        </authorList>
    </citation>
    <scope>NUCLEOTIDE SEQUENCE [LARGE SCALE GENOMIC DNA]</scope>
    <source>
        <strain>ATCC BAA-895 / CDC 4225-83 / SGSC4696</strain>
    </source>
</reference>
<name>ENTS_CITK8</name>
<keyword id="KW-0997">Cell inner membrane</keyword>
<keyword id="KW-1003">Cell membrane</keyword>
<keyword id="KW-0472">Membrane</keyword>
<keyword id="KW-1185">Reference proteome</keyword>
<keyword id="KW-0812">Transmembrane</keyword>
<keyword id="KW-1133">Transmembrane helix</keyword>
<keyword id="KW-0813">Transport</keyword>
<comment type="function">
    <text evidence="1">Component of an export pathway for enterobactin.</text>
</comment>
<comment type="subcellular location">
    <subcellularLocation>
        <location evidence="1">Cell inner membrane</location>
        <topology evidence="1">Multi-pass membrane protein</topology>
    </subcellularLocation>
</comment>
<comment type="similarity">
    <text evidence="1">Belongs to the major facilitator superfamily. EntS (TC 2.A.1.38) family.</text>
</comment>
<protein>
    <recommendedName>
        <fullName evidence="1">Enterobactin exporter EntS</fullName>
    </recommendedName>
</protein>
<sequence length="416" mass="43273">MNRQSWLLNLSLLKTHPAFRAVFLARFISIVSLGLLGVAVPVQIQMMTHSTWQVGLSVTLTGSAMFVGLMVGGVLADRYERKKVILLARGTCGIGFIGLCLNALLPEPSLLAIYLLGLWDGFFASLGVTALLAATPALVGRENLMQAGAITMLTVRLGSVISPMLGGVLLATGGVAWNYGLAAAGTFITLLPLLSLPALPPPPQPREHPLKSLLAAFRFLLSSPLIGGIALLGGLLTMASAVRVLYPALAINWHMSAAQIGLLYAAIPLGAAVGALTSGQLAHSVRPGLLMLVSTVGSFLAIGVFGLMPVWLLGVICLALFGWLSAISSLLQYTLLQTQTPEAMLGRINGLWTAQNVTGDAIGAALLGGLGAMMTPVASASVSGFGLVIVGLLLMLLLGELRRFRQPPPVPDGAPL</sequence>